<feature type="chain" id="PRO_0000108088" description="Quaternary ammonium compound-resistance protein QacG">
    <location>
        <begin position="1"/>
        <end position="107"/>
    </location>
</feature>
<feature type="transmembrane region" description="Helical" evidence="1">
    <location>
        <begin position="1"/>
        <end position="21"/>
    </location>
</feature>
<feature type="transmembrane region" description="Helical" evidence="1">
    <location>
        <begin position="26"/>
        <end position="46"/>
    </location>
</feature>
<feature type="transmembrane region" description="Helical" evidence="1">
    <location>
        <begin position="57"/>
        <end position="77"/>
    </location>
</feature>
<feature type="transmembrane region" description="Helical" evidence="1">
    <location>
        <begin position="84"/>
        <end position="104"/>
    </location>
</feature>
<protein>
    <recommendedName>
        <fullName>Quaternary ammonium compound-resistance protein QacG</fullName>
    </recommendedName>
    <alternativeName>
        <fullName>Quaternary ammonium determinant G</fullName>
    </alternativeName>
</protein>
<organism>
    <name type="scientific">Staphylococcus sp. (strain ST94)</name>
    <dbReference type="NCBI Taxonomy" id="126832"/>
    <lineage>
        <taxon>Bacteria</taxon>
        <taxon>Bacillati</taxon>
        <taxon>Bacillota</taxon>
        <taxon>Bacilli</taxon>
        <taxon>Bacillales</taxon>
        <taxon>Staphylococcaceae</taxon>
        <taxon>Staphylococcus</taxon>
    </lineage>
</organism>
<evidence type="ECO:0000255" key="1"/>
<evidence type="ECO:0000305" key="2"/>
<name>QACG_STAS9</name>
<gene>
    <name type="primary">qacG</name>
</gene>
<comment type="function">
    <text>Multidrug exporter. Is implicated for the resistance to bacteriocidal quaternary ammonium compounds.</text>
</comment>
<comment type="subcellular location">
    <subcellularLocation>
        <location evidence="2">Cell membrane</location>
        <topology evidence="2">Multi-pass membrane protein</topology>
    </subcellularLocation>
</comment>
<comment type="similarity">
    <text evidence="2">Belongs to the drug/metabolite transporter (DMT) superfamily. Small multidrug resistance (SMR) (TC 2.A.7.1) family.</text>
</comment>
<proteinExistence type="inferred from homology"/>
<keyword id="KW-1003">Cell membrane</keyword>
<keyword id="KW-0472">Membrane</keyword>
<keyword id="KW-0614">Plasmid</keyword>
<keyword id="KW-0812">Transmembrane</keyword>
<keyword id="KW-1133">Transmembrane helix</keyword>
<keyword id="KW-0813">Transport</keyword>
<sequence>MHYLYLFISIATEIIGTSFLKTSEGFTKLWPTLGTLLSFGICFYFLSLTIKFLPLNITYATWAGLGLVLTTIISVIVFKENVNLISIISIGLIVIGVVLLNVFGESH</sequence>
<dbReference type="EMBL" id="Y16944">
    <property type="protein sequence ID" value="CAA76542.1"/>
    <property type="molecule type" value="Genomic_DNA"/>
</dbReference>
<dbReference type="SMR" id="O87866"/>
<dbReference type="CARD" id="ARO:3007015">
    <property type="molecule name" value="qacG"/>
    <property type="mechanism identifier" value="ARO:0010000"/>
    <property type="mechanism name" value="antibiotic efflux"/>
</dbReference>
<dbReference type="GO" id="GO:0005886">
    <property type="term" value="C:plasma membrane"/>
    <property type="evidence" value="ECO:0007669"/>
    <property type="project" value="UniProtKB-SubCell"/>
</dbReference>
<dbReference type="GO" id="GO:0015199">
    <property type="term" value="F:amino-acid betaine transmembrane transporter activity"/>
    <property type="evidence" value="ECO:0007669"/>
    <property type="project" value="TreeGrafter"/>
</dbReference>
<dbReference type="GO" id="GO:0015297">
    <property type="term" value="F:antiporter activity"/>
    <property type="evidence" value="ECO:0007669"/>
    <property type="project" value="TreeGrafter"/>
</dbReference>
<dbReference type="GO" id="GO:0015220">
    <property type="term" value="F:choline transmembrane transporter activity"/>
    <property type="evidence" value="ECO:0007669"/>
    <property type="project" value="TreeGrafter"/>
</dbReference>
<dbReference type="GO" id="GO:0031460">
    <property type="term" value="P:glycine betaine transport"/>
    <property type="evidence" value="ECO:0007669"/>
    <property type="project" value="TreeGrafter"/>
</dbReference>
<dbReference type="FunFam" id="1.10.3730.20:FF:000001">
    <property type="entry name" value="Quaternary ammonium compound resistance transporter SugE"/>
    <property type="match status" value="1"/>
</dbReference>
<dbReference type="Gene3D" id="1.10.3730.20">
    <property type="match status" value="1"/>
</dbReference>
<dbReference type="InterPro" id="IPR000390">
    <property type="entry name" value="Small_drug/metabolite_transptr"/>
</dbReference>
<dbReference type="InterPro" id="IPR045324">
    <property type="entry name" value="Small_multidrug_res"/>
</dbReference>
<dbReference type="NCBIfam" id="NF000277">
    <property type="entry name" value="qac_SMR_G"/>
    <property type="match status" value="1"/>
</dbReference>
<dbReference type="NCBIfam" id="NF000384">
    <property type="entry name" value="QacCGHJ"/>
    <property type="match status" value="1"/>
</dbReference>
<dbReference type="PANTHER" id="PTHR30561:SF1">
    <property type="entry name" value="MULTIDRUG TRANSPORTER EMRE"/>
    <property type="match status" value="1"/>
</dbReference>
<dbReference type="PANTHER" id="PTHR30561">
    <property type="entry name" value="SMR FAMILY PROTON-DEPENDENT DRUG EFFLUX TRANSPORTER SUGE"/>
    <property type="match status" value="1"/>
</dbReference>
<dbReference type="Pfam" id="PF00893">
    <property type="entry name" value="Multi_Drug_Res"/>
    <property type="match status" value="1"/>
</dbReference>
<dbReference type="SUPFAM" id="SSF103481">
    <property type="entry name" value="Multidrug resistance efflux transporter EmrE"/>
    <property type="match status" value="1"/>
</dbReference>
<reference key="1">
    <citation type="journal article" date="1998" name="FEMS Microbiol. Lett.">
        <title>The Staphylococcus qacH gene product: a new member of the SMR family encoding multidrug resistance.</title>
        <authorList>
            <person name="Heir E."/>
            <person name="Sundheim G."/>
            <person name="Holck A.L."/>
        </authorList>
    </citation>
    <scope>NUCLEOTIDE SEQUENCE [GENOMIC DNA]</scope>
</reference>
<accession>O87866</accession>
<geneLocation type="plasmid">
    <name>pST94</name>
</geneLocation>